<comment type="function">
    <text evidence="3">Glycosyltransferase that possesses phloretin 2'-O-glycosyltransferase activity. Converts phloretin to phlorizin (phloretin 2'-O-glucoside), a potent antioxidant. Is specific for phloretin and does not possess glycosyltransferase activity toward caffeic acid, catechin, chlorogenic acid, 2-coumaric acid, 3-coumaric acid, 4-coumaric acid, cyanidin, 3,4-dihydroxyhydrocinnamic acid, epicatechin, 3-hydroxybenzoic acid, naringenin, 3,4-dihydroxybenzoic acid, quercetin and rutin. Can glycosylate phloretin in the presence of UDP-glucose, UDP-xylose and UDP-galactose.</text>
</comment>
<comment type="catalytic activity">
    <reaction evidence="3">
        <text>phloretin + UDP-alpha-D-glucose = phlorizin + UDP + H(+)</text>
        <dbReference type="Rhea" id="RHEA:51576"/>
        <dbReference type="ChEBI" id="CHEBI:8113"/>
        <dbReference type="ChEBI" id="CHEBI:15378"/>
        <dbReference type="ChEBI" id="CHEBI:17276"/>
        <dbReference type="ChEBI" id="CHEBI:58223"/>
        <dbReference type="ChEBI" id="CHEBI:58885"/>
        <dbReference type="EC" id="2.4.1.357"/>
    </reaction>
    <physiologicalReaction direction="left-to-right" evidence="3">
        <dbReference type="Rhea" id="RHEA:51577"/>
    </physiologicalReaction>
</comment>
<comment type="biophysicochemical properties">
    <kinetics>
        <KM evidence="3">0.62 uM for phloretin</KM>
        <KM evidence="3">13 uM for UDP-glucose</KM>
    </kinetics>
    <phDependence>
        <text evidence="3">Optimum pH is 7.7.</text>
    </phDependence>
    <temperatureDependence>
        <text evidence="3">Optimum temperature is 25 degrees Celsius.</text>
    </temperatureDependence>
</comment>
<comment type="tissue specificity">
    <text evidence="3">Highly expressed in roots and at lower levels in leaves, flowers and fruits.</text>
</comment>
<comment type="similarity">
    <text evidence="5">Belongs to the UDP-glycosyltransferase family.</text>
</comment>
<name>88F1G_MALDO</name>
<organism>
    <name type="scientific">Malus domestica</name>
    <name type="common">Apple</name>
    <name type="synonym">Pyrus malus</name>
    <dbReference type="NCBI Taxonomy" id="3750"/>
    <lineage>
        <taxon>Eukaryota</taxon>
        <taxon>Viridiplantae</taxon>
        <taxon>Streptophyta</taxon>
        <taxon>Embryophyta</taxon>
        <taxon>Tracheophyta</taxon>
        <taxon>Spermatophyta</taxon>
        <taxon>Magnoliopsida</taxon>
        <taxon>eudicotyledons</taxon>
        <taxon>Gunneridae</taxon>
        <taxon>Pentapetalae</taxon>
        <taxon>rosids</taxon>
        <taxon>fabids</taxon>
        <taxon>Rosales</taxon>
        <taxon>Rosaceae</taxon>
        <taxon>Amygdaloideae</taxon>
        <taxon>Maleae</taxon>
        <taxon>Malus</taxon>
    </lineage>
</organism>
<dbReference type="EC" id="2.4.1.357" evidence="3"/>
<dbReference type="EMBL" id="EU246349">
    <property type="protein sequence ID" value="ABY73540.1"/>
    <property type="molecule type" value="mRNA"/>
</dbReference>
<dbReference type="EMBL" id="KF574084">
    <property type="protein sequence ID" value="AHB33773.1"/>
    <property type="molecule type" value="mRNA"/>
</dbReference>
<dbReference type="SMR" id="B3TKC8"/>
<dbReference type="CAZy" id="GT1">
    <property type="family name" value="Glycosyltransferase Family 1"/>
</dbReference>
<dbReference type="BioCyc" id="MetaCyc:MONOMER-15672"/>
<dbReference type="BRENDA" id="2.4.1.357">
    <property type="organism ID" value="3164"/>
</dbReference>
<dbReference type="GO" id="GO:0035251">
    <property type="term" value="F:UDP-glucosyltransferase activity"/>
    <property type="evidence" value="ECO:0000314"/>
    <property type="project" value="UniProtKB"/>
</dbReference>
<dbReference type="CDD" id="cd03784">
    <property type="entry name" value="GT1_Gtf-like"/>
    <property type="match status" value="1"/>
</dbReference>
<dbReference type="FunFam" id="3.40.50.2000:FF:000020">
    <property type="entry name" value="Glycosyltransferase"/>
    <property type="match status" value="1"/>
</dbReference>
<dbReference type="FunFam" id="3.40.50.2000:FF:000095">
    <property type="entry name" value="Glycosyltransferase"/>
    <property type="match status" value="1"/>
</dbReference>
<dbReference type="Gene3D" id="3.40.50.2000">
    <property type="entry name" value="Glycogen Phosphorylase B"/>
    <property type="match status" value="2"/>
</dbReference>
<dbReference type="InterPro" id="IPR050481">
    <property type="entry name" value="UDP-glycosyltransf_plant"/>
</dbReference>
<dbReference type="InterPro" id="IPR002213">
    <property type="entry name" value="UDP_glucos_trans"/>
</dbReference>
<dbReference type="InterPro" id="IPR035595">
    <property type="entry name" value="UDP_glycos_trans_CS"/>
</dbReference>
<dbReference type="PANTHER" id="PTHR48048">
    <property type="entry name" value="GLYCOSYLTRANSFERASE"/>
    <property type="match status" value="1"/>
</dbReference>
<dbReference type="PANTHER" id="PTHR48048:SF20">
    <property type="entry name" value="GLYCOSYLTRANSFERASE"/>
    <property type="match status" value="1"/>
</dbReference>
<dbReference type="Pfam" id="PF00201">
    <property type="entry name" value="UDPGT"/>
    <property type="match status" value="1"/>
</dbReference>
<dbReference type="SUPFAM" id="SSF53756">
    <property type="entry name" value="UDP-Glycosyltransferase/glycogen phosphorylase"/>
    <property type="match status" value="1"/>
</dbReference>
<dbReference type="PROSITE" id="PS00375">
    <property type="entry name" value="UDPGT"/>
    <property type="match status" value="1"/>
</dbReference>
<sequence length="483" mass="53547">MGDVIVLYASPGMGHIVSMVELGKFIVHRYGPHKFSITILYTCGSIVDTASIPVYIRRISHSHPFISFRQFPRVTNNITRNISVPAITFDFIRQNDPHVRSALQEISKSATVRAFIIDLFCTSALPIGKEFNIPTYYFCTSGAAILAAFLYLPKIDEQTKTTESFKDLRDTVFEFPGWKSPLKATHMVQLVLDRNDPAYSDMIYFCSHLPKSNGIIVNTFEELEPPSVLQAIAGGLCVPDGPTPPVYYVGPLIEEEKELSKDADAAEKEDCLSWLDKQPSRSVLFLCFGSMGSFPAAQLKEIANGLEASGQRFLWVVKKPPVEEKSKQVHGVDDFDLKGVLPEGFLERTADRGMVVKSWAPQVVVLKKESVGGFVTHCGWNSVLEAVVAGVPMIAWPLYAEQHMNRNVLVTDMEIAIGVEQRDEEGGFVSGEEVERRVRELMESEGGRVLRERCKKLGEMASAALGETGSSTRNLVNFVSSIT</sequence>
<accession>B3TKC8</accession>
<accession>V5REG9</accession>
<proteinExistence type="evidence at protein level"/>
<keyword id="KW-0328">Glycosyltransferase</keyword>
<keyword id="KW-0808">Transferase</keyword>
<protein>
    <recommendedName>
        <fullName evidence="5">Phloretin 2'-O-glucosyltransferase</fullName>
        <ecNumber evidence="3">2.4.1.357</ecNumber>
    </recommendedName>
    <alternativeName>
        <fullName evidence="4">Phloretin glucosyltransferase 1</fullName>
        <shortName evidence="4">MdPGT1</shortName>
    </alternativeName>
    <alternativeName>
        <fullName evidence="5">UDP-glucose:phloretin 2'-O-glucosyltransferase</fullName>
    </alternativeName>
    <alternativeName>
        <fullName evidence="4">UDP-glycosyltransferase 88F1</fullName>
    </alternativeName>
</protein>
<evidence type="ECO:0000250" key="1">
    <source>
        <dbReference type="UniProtKB" id="A0A0A1HA03"/>
    </source>
</evidence>
<evidence type="ECO:0000250" key="2">
    <source>
        <dbReference type="UniProtKB" id="P51094"/>
    </source>
</evidence>
<evidence type="ECO:0000269" key="3">
    <source>
    </source>
</evidence>
<evidence type="ECO:0000303" key="4">
    <source>
    </source>
</evidence>
<evidence type="ECO:0000305" key="5"/>
<feature type="chain" id="PRO_0000434451" description="Phloretin 2'-O-glucosyltransferase">
    <location>
        <begin position="1"/>
        <end position="483"/>
    </location>
</feature>
<feature type="active site" description="Proton acceptor" evidence="1">
    <location>
        <position position="15"/>
    </location>
</feature>
<feature type="active site" description="Charge relay" evidence="1">
    <location>
        <position position="118"/>
    </location>
</feature>
<feature type="binding site" evidence="2">
    <location>
        <position position="15"/>
    </location>
    <ligand>
        <name>an anthocyanidin</name>
        <dbReference type="ChEBI" id="CHEBI:143576"/>
    </ligand>
</feature>
<feature type="binding site" evidence="1">
    <location>
        <position position="140"/>
    </location>
    <ligand>
        <name>UDP-alpha-D-glucose</name>
        <dbReference type="ChEBI" id="CHEBI:58885"/>
    </ligand>
</feature>
<feature type="binding site" evidence="1">
    <location>
        <position position="360"/>
    </location>
    <ligand>
        <name>UDP-alpha-D-glucose</name>
        <dbReference type="ChEBI" id="CHEBI:58885"/>
    </ligand>
</feature>
<feature type="binding site" evidence="1">
    <location>
        <position position="362"/>
    </location>
    <ligand>
        <name>UDP-alpha-D-glucose</name>
        <dbReference type="ChEBI" id="CHEBI:58885"/>
    </ligand>
</feature>
<feature type="binding site" evidence="1">
    <location>
        <position position="377"/>
    </location>
    <ligand>
        <name>UDP-alpha-D-glucose</name>
        <dbReference type="ChEBI" id="CHEBI:58885"/>
    </ligand>
</feature>
<feature type="binding site" evidence="1">
    <location>
        <position position="380"/>
    </location>
    <ligand>
        <name>UDP-alpha-D-glucose</name>
        <dbReference type="ChEBI" id="CHEBI:58885"/>
    </ligand>
</feature>
<feature type="binding site" evidence="1">
    <location>
        <position position="381"/>
    </location>
    <ligand>
        <name>UDP-alpha-D-glucose</name>
        <dbReference type="ChEBI" id="CHEBI:58885"/>
    </ligand>
</feature>
<feature type="binding site" evidence="1">
    <location>
        <position position="382"/>
    </location>
    <ligand>
        <name>UDP-alpha-D-glucose</name>
        <dbReference type="ChEBI" id="CHEBI:58885"/>
    </ligand>
</feature>
<feature type="binding site" evidence="1">
    <location>
        <position position="385"/>
    </location>
    <ligand>
        <name>UDP-alpha-D-glucose</name>
        <dbReference type="ChEBI" id="CHEBI:58885"/>
    </ligand>
</feature>
<feature type="binding site" evidence="2">
    <location>
        <position position="400"/>
    </location>
    <ligand>
        <name>an anthocyanidin</name>
        <dbReference type="ChEBI" id="CHEBI:143576"/>
    </ligand>
</feature>
<feature type="binding site" evidence="1">
    <location>
        <position position="401"/>
    </location>
    <ligand>
        <name>UDP-alpha-D-glucose</name>
        <dbReference type="ChEBI" id="CHEBI:58885"/>
    </ligand>
</feature>
<feature type="binding site" evidence="1">
    <location>
        <position position="402"/>
    </location>
    <ligand>
        <name>UDP-alpha-D-glucose</name>
        <dbReference type="ChEBI" id="CHEBI:58885"/>
    </ligand>
</feature>
<gene>
    <name evidence="4" type="primary">UGT88F1</name>
</gene>
<reference key="1">
    <citation type="journal article" date="2008" name="FEBS J.">
        <title>Isolation and characterization of a novel glycosyltransferase that converts phloretin to phlorizin, a potent antioxidant in apple.</title>
        <authorList>
            <person name="Jugde H."/>
            <person name="Nguy D."/>
            <person name="Moller I."/>
            <person name="Cooney J.M."/>
            <person name="Atkinson R.G."/>
        </authorList>
    </citation>
    <scope>NUCLEOTIDE SEQUENCE [MRNA]</scope>
    <scope>FUNCTION</scope>
    <scope>CATALYTIC ACTIVITY</scope>
    <scope>BIOPHYSICOCHEMICAL PROPERTIES</scope>
    <scope>TISSUE SPECIFICITY</scope>
    <source>
        <strain>cv. Royal Gala</strain>
    </source>
</reference>
<reference key="2">
    <citation type="submission" date="2013-08" db="EMBL/GenBank/DDBJ databases">
        <title>Cloning and bioinformatic analysis of phloridzin glycosyltransferase from Malus domestica.</title>
        <authorList>
            <person name="Xu Y."/>
        </authorList>
    </citation>
    <scope>NUCLEOTIDE SEQUENCE [MRNA]</scope>
    <source>
        <strain>cv. Golden Delicious</strain>
    </source>
</reference>